<feature type="chain" id="PRO_1000194449" description="Ribonuclease HII">
    <location>
        <begin position="1"/>
        <end position="209"/>
    </location>
</feature>
<feature type="domain" description="RNase H type-2" evidence="2">
    <location>
        <begin position="19"/>
        <end position="208"/>
    </location>
</feature>
<feature type="binding site" evidence="1">
    <location>
        <position position="25"/>
    </location>
    <ligand>
        <name>a divalent metal cation</name>
        <dbReference type="ChEBI" id="CHEBI:60240"/>
    </ligand>
</feature>
<feature type="binding site" evidence="1">
    <location>
        <position position="26"/>
    </location>
    <ligand>
        <name>a divalent metal cation</name>
        <dbReference type="ChEBI" id="CHEBI:60240"/>
    </ligand>
</feature>
<feature type="binding site" evidence="1">
    <location>
        <position position="117"/>
    </location>
    <ligand>
        <name>a divalent metal cation</name>
        <dbReference type="ChEBI" id="CHEBI:60240"/>
    </ligand>
</feature>
<reference key="1">
    <citation type="submission" date="2009-01" db="EMBL/GenBank/DDBJ databases">
        <title>Complete sequence of Diaphorobacter sp. TPSY.</title>
        <authorList>
            <consortium name="US DOE Joint Genome Institute"/>
            <person name="Lucas S."/>
            <person name="Copeland A."/>
            <person name="Lapidus A."/>
            <person name="Glavina del Rio T."/>
            <person name="Tice H."/>
            <person name="Bruce D."/>
            <person name="Goodwin L."/>
            <person name="Pitluck S."/>
            <person name="Chertkov O."/>
            <person name="Brettin T."/>
            <person name="Detter J.C."/>
            <person name="Han C."/>
            <person name="Larimer F."/>
            <person name="Land M."/>
            <person name="Hauser L."/>
            <person name="Kyrpides N."/>
            <person name="Mikhailova N."/>
            <person name="Coates J.D."/>
        </authorList>
    </citation>
    <scope>NUCLEOTIDE SEQUENCE [LARGE SCALE GENOMIC DNA]</scope>
    <source>
        <strain>TPSY</strain>
    </source>
</reference>
<comment type="function">
    <text evidence="1">Endonuclease that specifically degrades the RNA of RNA-DNA hybrids.</text>
</comment>
<comment type="catalytic activity">
    <reaction evidence="1">
        <text>Endonucleolytic cleavage to 5'-phosphomonoester.</text>
        <dbReference type="EC" id="3.1.26.4"/>
    </reaction>
</comment>
<comment type="cofactor">
    <cofactor evidence="1">
        <name>Mn(2+)</name>
        <dbReference type="ChEBI" id="CHEBI:29035"/>
    </cofactor>
    <cofactor evidence="1">
        <name>Mg(2+)</name>
        <dbReference type="ChEBI" id="CHEBI:18420"/>
    </cofactor>
    <text evidence="1">Manganese or magnesium. Binds 1 divalent metal ion per monomer in the absence of substrate. May bind a second metal ion after substrate binding.</text>
</comment>
<comment type="subcellular location">
    <subcellularLocation>
        <location evidence="1">Cytoplasm</location>
    </subcellularLocation>
</comment>
<comment type="similarity">
    <text evidence="1">Belongs to the RNase HII family.</text>
</comment>
<protein>
    <recommendedName>
        <fullName evidence="1">Ribonuclease HII</fullName>
        <shortName evidence="1">RNase HII</shortName>
        <ecNumber evidence="1">3.1.26.4</ecNumber>
    </recommendedName>
</protein>
<evidence type="ECO:0000255" key="1">
    <source>
        <dbReference type="HAMAP-Rule" id="MF_00052"/>
    </source>
</evidence>
<evidence type="ECO:0000255" key="2">
    <source>
        <dbReference type="PROSITE-ProRule" id="PRU01319"/>
    </source>
</evidence>
<proteinExistence type="inferred from homology"/>
<name>RNH2_ACIET</name>
<gene>
    <name evidence="1" type="primary">rnhB</name>
    <name type="ordered locus">Dtpsy_1237</name>
</gene>
<organism>
    <name type="scientific">Acidovorax ebreus (strain TPSY)</name>
    <name type="common">Diaphorobacter sp. (strain TPSY)</name>
    <dbReference type="NCBI Taxonomy" id="535289"/>
    <lineage>
        <taxon>Bacteria</taxon>
        <taxon>Pseudomonadati</taxon>
        <taxon>Pseudomonadota</taxon>
        <taxon>Betaproteobacteria</taxon>
        <taxon>Burkholderiales</taxon>
        <taxon>Comamonadaceae</taxon>
        <taxon>Diaphorobacter</taxon>
    </lineage>
</organism>
<dbReference type="EC" id="3.1.26.4" evidence="1"/>
<dbReference type="EMBL" id="CP001392">
    <property type="protein sequence ID" value="ACM32704.1"/>
    <property type="molecule type" value="Genomic_DNA"/>
</dbReference>
<dbReference type="RefSeq" id="WP_011805766.1">
    <property type="nucleotide sequence ID" value="NC_011992.1"/>
</dbReference>
<dbReference type="SMR" id="B9MGN1"/>
<dbReference type="GeneID" id="84682018"/>
<dbReference type="KEGG" id="dia:Dtpsy_1237"/>
<dbReference type="eggNOG" id="COG0164">
    <property type="taxonomic scope" value="Bacteria"/>
</dbReference>
<dbReference type="HOGENOM" id="CLU_036532_3_2_4"/>
<dbReference type="Proteomes" id="UP000000450">
    <property type="component" value="Chromosome"/>
</dbReference>
<dbReference type="GO" id="GO:0005737">
    <property type="term" value="C:cytoplasm"/>
    <property type="evidence" value="ECO:0007669"/>
    <property type="project" value="UniProtKB-SubCell"/>
</dbReference>
<dbReference type="GO" id="GO:0032299">
    <property type="term" value="C:ribonuclease H2 complex"/>
    <property type="evidence" value="ECO:0007669"/>
    <property type="project" value="TreeGrafter"/>
</dbReference>
<dbReference type="GO" id="GO:0030145">
    <property type="term" value="F:manganese ion binding"/>
    <property type="evidence" value="ECO:0007669"/>
    <property type="project" value="UniProtKB-UniRule"/>
</dbReference>
<dbReference type="GO" id="GO:0003723">
    <property type="term" value="F:RNA binding"/>
    <property type="evidence" value="ECO:0007669"/>
    <property type="project" value="InterPro"/>
</dbReference>
<dbReference type="GO" id="GO:0004523">
    <property type="term" value="F:RNA-DNA hybrid ribonuclease activity"/>
    <property type="evidence" value="ECO:0007669"/>
    <property type="project" value="UniProtKB-UniRule"/>
</dbReference>
<dbReference type="GO" id="GO:0043137">
    <property type="term" value="P:DNA replication, removal of RNA primer"/>
    <property type="evidence" value="ECO:0007669"/>
    <property type="project" value="TreeGrafter"/>
</dbReference>
<dbReference type="GO" id="GO:0006298">
    <property type="term" value="P:mismatch repair"/>
    <property type="evidence" value="ECO:0007669"/>
    <property type="project" value="TreeGrafter"/>
</dbReference>
<dbReference type="CDD" id="cd07182">
    <property type="entry name" value="RNase_HII_bacteria_HII_like"/>
    <property type="match status" value="1"/>
</dbReference>
<dbReference type="FunFam" id="3.30.420.10:FF:000006">
    <property type="entry name" value="Ribonuclease HII"/>
    <property type="match status" value="1"/>
</dbReference>
<dbReference type="Gene3D" id="3.30.420.10">
    <property type="entry name" value="Ribonuclease H-like superfamily/Ribonuclease H"/>
    <property type="match status" value="1"/>
</dbReference>
<dbReference type="HAMAP" id="MF_00052_B">
    <property type="entry name" value="RNase_HII_B"/>
    <property type="match status" value="1"/>
</dbReference>
<dbReference type="InterPro" id="IPR022898">
    <property type="entry name" value="RNase_HII"/>
</dbReference>
<dbReference type="InterPro" id="IPR001352">
    <property type="entry name" value="RNase_HII/HIII"/>
</dbReference>
<dbReference type="InterPro" id="IPR024567">
    <property type="entry name" value="RNase_HII/HIII_dom"/>
</dbReference>
<dbReference type="InterPro" id="IPR012337">
    <property type="entry name" value="RNaseH-like_sf"/>
</dbReference>
<dbReference type="InterPro" id="IPR036397">
    <property type="entry name" value="RNaseH_sf"/>
</dbReference>
<dbReference type="NCBIfam" id="NF000594">
    <property type="entry name" value="PRK00015.1-1"/>
    <property type="match status" value="1"/>
</dbReference>
<dbReference type="NCBIfam" id="NF000595">
    <property type="entry name" value="PRK00015.1-3"/>
    <property type="match status" value="1"/>
</dbReference>
<dbReference type="NCBIfam" id="NF000596">
    <property type="entry name" value="PRK00015.1-4"/>
    <property type="match status" value="1"/>
</dbReference>
<dbReference type="PANTHER" id="PTHR10954">
    <property type="entry name" value="RIBONUCLEASE H2 SUBUNIT A"/>
    <property type="match status" value="1"/>
</dbReference>
<dbReference type="PANTHER" id="PTHR10954:SF18">
    <property type="entry name" value="RIBONUCLEASE HII"/>
    <property type="match status" value="1"/>
</dbReference>
<dbReference type="Pfam" id="PF01351">
    <property type="entry name" value="RNase_HII"/>
    <property type="match status" value="1"/>
</dbReference>
<dbReference type="SUPFAM" id="SSF53098">
    <property type="entry name" value="Ribonuclease H-like"/>
    <property type="match status" value="1"/>
</dbReference>
<dbReference type="PROSITE" id="PS51975">
    <property type="entry name" value="RNASE_H_2"/>
    <property type="match status" value="1"/>
</dbReference>
<accession>B9MGN1</accession>
<sequence length="209" mass="22221">MRSRTSLLEQAALDWHPPGLVAGVDEAGRGPLAGPVVAAAVILDDLQPIAGLADSKVLTAARREKLYDEIRAKALCCSIAEASVEEIDQHNILQATMLAMRRAVLGLRLKPVRVLVDGNRLPPLDVPAEAIVKGDALVASISAASILAKVTRDRWCAQLHQQYPVYGFAGHKGYGTAEHLAALEVHGACPQHRRSFAPVARALQAPVAA</sequence>
<keyword id="KW-0963">Cytoplasm</keyword>
<keyword id="KW-0255">Endonuclease</keyword>
<keyword id="KW-0378">Hydrolase</keyword>
<keyword id="KW-0464">Manganese</keyword>
<keyword id="KW-0479">Metal-binding</keyword>
<keyword id="KW-0540">Nuclease</keyword>
<keyword id="KW-1185">Reference proteome</keyword>